<organism>
    <name type="scientific">Vibrio cholerae serotype O1 (strain ATCC 39315 / El Tor Inaba N16961)</name>
    <dbReference type="NCBI Taxonomy" id="243277"/>
    <lineage>
        <taxon>Bacteria</taxon>
        <taxon>Pseudomonadati</taxon>
        <taxon>Pseudomonadota</taxon>
        <taxon>Gammaproteobacteria</taxon>
        <taxon>Vibrionales</taxon>
        <taxon>Vibrionaceae</taxon>
        <taxon>Vibrio</taxon>
    </lineage>
</organism>
<feature type="chain" id="PRO_0000191200" description="Chaperone protein ClpB">
    <location>
        <begin position="1"/>
        <end position="857"/>
    </location>
</feature>
<feature type="domain" description="Clp R" evidence="2">
    <location>
        <begin position="3"/>
        <end position="146"/>
    </location>
</feature>
<feature type="region of interest" description="Repeat 1" evidence="2">
    <location>
        <begin position="6"/>
        <end position="71"/>
    </location>
</feature>
<feature type="region of interest" description="Repeat 2" evidence="2">
    <location>
        <begin position="83"/>
        <end position="146"/>
    </location>
</feature>
<feature type="region of interest" description="NBD1" evidence="1">
    <location>
        <begin position="159"/>
        <end position="340"/>
    </location>
</feature>
<feature type="region of interest" description="Linker" evidence="1">
    <location>
        <begin position="341"/>
        <end position="545"/>
    </location>
</feature>
<feature type="region of interest" description="NBD2" evidence="1">
    <location>
        <begin position="555"/>
        <end position="765"/>
    </location>
</feature>
<feature type="region of interest" description="C-terminal" evidence="1">
    <location>
        <begin position="766"/>
        <end position="857"/>
    </location>
</feature>
<feature type="coiled-coil region" evidence="1">
    <location>
        <begin position="391"/>
        <end position="525"/>
    </location>
</feature>
<feature type="binding site" evidence="1">
    <location>
        <begin position="206"/>
        <end position="213"/>
    </location>
    <ligand>
        <name>ATP</name>
        <dbReference type="ChEBI" id="CHEBI:30616"/>
        <label>1</label>
    </ligand>
</feature>
<feature type="binding site" evidence="1">
    <location>
        <begin position="605"/>
        <end position="612"/>
    </location>
    <ligand>
        <name>ATP</name>
        <dbReference type="ChEBI" id="CHEBI:30616"/>
        <label>2</label>
    </ligand>
</feature>
<evidence type="ECO:0000250" key="1"/>
<evidence type="ECO:0000255" key="2">
    <source>
        <dbReference type="PROSITE-ProRule" id="PRU01251"/>
    </source>
</evidence>
<evidence type="ECO:0000305" key="3"/>
<gene>
    <name type="primary">clpB</name>
    <name type="ordered locus">VC_0711</name>
</gene>
<protein>
    <recommendedName>
        <fullName>Chaperone protein ClpB</fullName>
    </recommendedName>
</protein>
<name>CLPB_VIBCH</name>
<proteinExistence type="inferred from homology"/>
<comment type="function">
    <text evidence="1">Part of a stress-induced multi-chaperone system, it is involved in the recovery of the cell from heat-induced damage, in cooperation with DnaK, DnaJ and GrpE. Acts before DnaK, in the processing of protein aggregates. Protein binding stimulates the ATPase activity; ATP hydrolysis unfolds the denatured protein aggregates, which probably helps expose new hydrophobic binding sites on the surface of ClpB-bound aggregates, contributing to the solubilization and refolding of denatured protein aggregates by DnaK (By similarity).</text>
</comment>
<comment type="subunit">
    <text evidence="1">Homohexamer. The oligomerization is ATP-dependent (By similarity).</text>
</comment>
<comment type="subcellular location">
    <subcellularLocation>
        <location evidence="3">Cytoplasm</location>
    </subcellularLocation>
</comment>
<comment type="domain">
    <text evidence="1">The Clp repeat (R) domain probably functions as a substrate-discriminating domain, recruiting aggregated proteins to the ClpB hexamer and/or stabilizing bound proteins. The NBD2 domain is responsible for oligomerization, whereas the NBD1 domain stabilizes the hexamer probably in an ATP-dependent manner. The movement of the coiled-coil domain is essential for ClpB ability to rescue proteins from an aggregated state, probably by pulling apart large aggregated proteins, which are bound between the coiled-coils motifs of adjacent ClpB subunits in the functional hexamer (By similarity).</text>
</comment>
<comment type="similarity">
    <text evidence="3">Belongs to the ClpA/ClpB family.</text>
</comment>
<reference key="1">
    <citation type="journal article" date="2000" name="Nature">
        <title>DNA sequence of both chromosomes of the cholera pathogen Vibrio cholerae.</title>
        <authorList>
            <person name="Heidelberg J.F."/>
            <person name="Eisen J.A."/>
            <person name="Nelson W.C."/>
            <person name="Clayton R.A."/>
            <person name="Gwinn M.L."/>
            <person name="Dodson R.J."/>
            <person name="Haft D.H."/>
            <person name="Hickey E.K."/>
            <person name="Peterson J.D."/>
            <person name="Umayam L.A."/>
            <person name="Gill S.R."/>
            <person name="Nelson K.E."/>
            <person name="Read T.D."/>
            <person name="Tettelin H."/>
            <person name="Richardson D.L."/>
            <person name="Ermolaeva M.D."/>
            <person name="Vamathevan J.J."/>
            <person name="Bass S."/>
            <person name="Qin H."/>
            <person name="Dragoi I."/>
            <person name="Sellers P."/>
            <person name="McDonald L.A."/>
            <person name="Utterback T.R."/>
            <person name="Fleischmann R.D."/>
            <person name="Nierman W.C."/>
            <person name="White O."/>
            <person name="Salzberg S.L."/>
            <person name="Smith H.O."/>
            <person name="Colwell R.R."/>
            <person name="Mekalanos J.J."/>
            <person name="Venter J.C."/>
            <person name="Fraser C.M."/>
        </authorList>
    </citation>
    <scope>NUCLEOTIDE SEQUENCE [LARGE SCALE GENOMIC DNA]</scope>
    <source>
        <strain>ATCC 39315 / El Tor Inaba N16961</strain>
    </source>
</reference>
<dbReference type="EMBL" id="AE003852">
    <property type="protein sequence ID" value="AAF93876.1"/>
    <property type="molecule type" value="Genomic_DNA"/>
</dbReference>
<dbReference type="PIR" id="A82290">
    <property type="entry name" value="A82290"/>
</dbReference>
<dbReference type="RefSeq" id="NP_230360.1">
    <property type="nucleotide sequence ID" value="NC_002505.1"/>
</dbReference>
<dbReference type="RefSeq" id="WP_001235051.1">
    <property type="nucleotide sequence ID" value="NZ_LT906614.1"/>
</dbReference>
<dbReference type="SMR" id="Q9KU18"/>
<dbReference type="STRING" id="243277.VC_0711"/>
<dbReference type="DNASU" id="2615715"/>
<dbReference type="EnsemblBacteria" id="AAF93876">
    <property type="protein sequence ID" value="AAF93876"/>
    <property type="gene ID" value="VC_0711"/>
</dbReference>
<dbReference type="KEGG" id="vch:VC_0711"/>
<dbReference type="PATRIC" id="fig|243277.26.peg.681"/>
<dbReference type="eggNOG" id="COG0542">
    <property type="taxonomic scope" value="Bacteria"/>
</dbReference>
<dbReference type="HOGENOM" id="CLU_005070_4_0_6"/>
<dbReference type="Proteomes" id="UP000000584">
    <property type="component" value="Chromosome 1"/>
</dbReference>
<dbReference type="GO" id="GO:0005737">
    <property type="term" value="C:cytoplasm"/>
    <property type="evidence" value="ECO:0000318"/>
    <property type="project" value="GO_Central"/>
</dbReference>
<dbReference type="GO" id="GO:0005524">
    <property type="term" value="F:ATP binding"/>
    <property type="evidence" value="ECO:0007669"/>
    <property type="project" value="UniProtKB-KW"/>
</dbReference>
<dbReference type="GO" id="GO:0016887">
    <property type="term" value="F:ATP hydrolysis activity"/>
    <property type="evidence" value="ECO:0000318"/>
    <property type="project" value="GO_Central"/>
</dbReference>
<dbReference type="GO" id="GO:0034605">
    <property type="term" value="P:cellular response to heat"/>
    <property type="evidence" value="ECO:0000318"/>
    <property type="project" value="GO_Central"/>
</dbReference>
<dbReference type="GO" id="GO:0042026">
    <property type="term" value="P:protein refolding"/>
    <property type="evidence" value="ECO:0007669"/>
    <property type="project" value="InterPro"/>
</dbReference>
<dbReference type="CDD" id="cd00009">
    <property type="entry name" value="AAA"/>
    <property type="match status" value="1"/>
</dbReference>
<dbReference type="CDD" id="cd19499">
    <property type="entry name" value="RecA-like_ClpB_Hsp104-like"/>
    <property type="match status" value="1"/>
</dbReference>
<dbReference type="FunFam" id="1.10.1780.10:FF:000003">
    <property type="entry name" value="ATP-dependent chaperone ClpB"/>
    <property type="match status" value="1"/>
</dbReference>
<dbReference type="FunFam" id="1.10.8.60:FF:000017">
    <property type="entry name" value="ATP-dependent chaperone ClpB"/>
    <property type="match status" value="1"/>
</dbReference>
<dbReference type="FunFam" id="3.40.50.300:FF:000120">
    <property type="entry name" value="ATP-dependent chaperone ClpB"/>
    <property type="match status" value="1"/>
</dbReference>
<dbReference type="FunFam" id="3.40.50.300:FF:000025">
    <property type="entry name" value="ATP-dependent Clp protease subunit"/>
    <property type="match status" value="1"/>
</dbReference>
<dbReference type="FunFam" id="3.40.50.300:FF:000010">
    <property type="entry name" value="Chaperone clpB 1, putative"/>
    <property type="match status" value="1"/>
</dbReference>
<dbReference type="Gene3D" id="1.10.8.60">
    <property type="match status" value="1"/>
</dbReference>
<dbReference type="Gene3D" id="1.10.1780.10">
    <property type="entry name" value="Clp, N-terminal domain"/>
    <property type="match status" value="1"/>
</dbReference>
<dbReference type="Gene3D" id="3.40.50.300">
    <property type="entry name" value="P-loop containing nucleotide triphosphate hydrolases"/>
    <property type="match status" value="3"/>
</dbReference>
<dbReference type="InterPro" id="IPR003593">
    <property type="entry name" value="AAA+_ATPase"/>
</dbReference>
<dbReference type="InterPro" id="IPR003959">
    <property type="entry name" value="ATPase_AAA_core"/>
</dbReference>
<dbReference type="InterPro" id="IPR017730">
    <property type="entry name" value="Chaperonin_ClpB"/>
</dbReference>
<dbReference type="InterPro" id="IPR019489">
    <property type="entry name" value="Clp_ATPase_C"/>
</dbReference>
<dbReference type="InterPro" id="IPR036628">
    <property type="entry name" value="Clp_N_dom_sf"/>
</dbReference>
<dbReference type="InterPro" id="IPR004176">
    <property type="entry name" value="Clp_R_dom"/>
</dbReference>
<dbReference type="InterPro" id="IPR001270">
    <property type="entry name" value="ClpA/B"/>
</dbReference>
<dbReference type="InterPro" id="IPR018368">
    <property type="entry name" value="ClpA/B_CS1"/>
</dbReference>
<dbReference type="InterPro" id="IPR028299">
    <property type="entry name" value="ClpA/B_CS2"/>
</dbReference>
<dbReference type="InterPro" id="IPR041546">
    <property type="entry name" value="ClpA/ClpB_AAA_lid"/>
</dbReference>
<dbReference type="InterPro" id="IPR050130">
    <property type="entry name" value="ClpA_ClpB"/>
</dbReference>
<dbReference type="InterPro" id="IPR027417">
    <property type="entry name" value="P-loop_NTPase"/>
</dbReference>
<dbReference type="NCBIfam" id="TIGR03346">
    <property type="entry name" value="chaperone_ClpB"/>
    <property type="match status" value="1"/>
</dbReference>
<dbReference type="NCBIfam" id="NF008118">
    <property type="entry name" value="PRK10865.1"/>
    <property type="match status" value="1"/>
</dbReference>
<dbReference type="PANTHER" id="PTHR11638">
    <property type="entry name" value="ATP-DEPENDENT CLP PROTEASE"/>
    <property type="match status" value="1"/>
</dbReference>
<dbReference type="PANTHER" id="PTHR11638:SF18">
    <property type="entry name" value="HEAT SHOCK PROTEIN 104"/>
    <property type="match status" value="1"/>
</dbReference>
<dbReference type="Pfam" id="PF00004">
    <property type="entry name" value="AAA"/>
    <property type="match status" value="1"/>
</dbReference>
<dbReference type="Pfam" id="PF07724">
    <property type="entry name" value="AAA_2"/>
    <property type="match status" value="1"/>
</dbReference>
<dbReference type="Pfam" id="PF17871">
    <property type="entry name" value="AAA_lid_9"/>
    <property type="match status" value="1"/>
</dbReference>
<dbReference type="Pfam" id="PF02861">
    <property type="entry name" value="Clp_N"/>
    <property type="match status" value="2"/>
</dbReference>
<dbReference type="Pfam" id="PF10431">
    <property type="entry name" value="ClpB_D2-small"/>
    <property type="match status" value="1"/>
</dbReference>
<dbReference type="PRINTS" id="PR00300">
    <property type="entry name" value="CLPPROTEASEA"/>
</dbReference>
<dbReference type="SMART" id="SM00382">
    <property type="entry name" value="AAA"/>
    <property type="match status" value="2"/>
</dbReference>
<dbReference type="SMART" id="SM01086">
    <property type="entry name" value="ClpB_D2-small"/>
    <property type="match status" value="1"/>
</dbReference>
<dbReference type="SUPFAM" id="SSF81923">
    <property type="entry name" value="Double Clp-N motif"/>
    <property type="match status" value="1"/>
</dbReference>
<dbReference type="SUPFAM" id="SSF52540">
    <property type="entry name" value="P-loop containing nucleoside triphosphate hydrolases"/>
    <property type="match status" value="2"/>
</dbReference>
<dbReference type="PROSITE" id="PS51903">
    <property type="entry name" value="CLP_R"/>
    <property type="match status" value="1"/>
</dbReference>
<dbReference type="PROSITE" id="PS00870">
    <property type="entry name" value="CLPAB_1"/>
    <property type="match status" value="1"/>
</dbReference>
<dbReference type="PROSITE" id="PS00871">
    <property type="entry name" value="CLPAB_2"/>
    <property type="match status" value="1"/>
</dbReference>
<keyword id="KW-0067">ATP-binding</keyword>
<keyword id="KW-0143">Chaperone</keyword>
<keyword id="KW-0175">Coiled coil</keyword>
<keyword id="KW-0963">Cytoplasm</keyword>
<keyword id="KW-0547">Nucleotide-binding</keyword>
<keyword id="KW-1185">Reference proteome</keyword>
<keyword id="KW-0677">Repeat</keyword>
<keyword id="KW-0346">Stress response</keyword>
<sequence length="857" mass="95828">MRLDRFTSKFQIAISDAQSLALGRDHQYIEPVHLMVALLDQNGSPIRPLLTMLNVDVMQLRSKLGEMLDRLPKVSGIGGDVQLSSALGSLFNLCDKVAQKRQDAYISSEIYLLAAIEDKGPLGHLLKEFGLTEKKVSEAIEKIRGGQKVNDPNAEELRQALEKFTIDLTERAEQGKLDPVIGRDDEIRRTIQVLQRRTKNNPVIIGEPGVGKTAIVEGLAQRIINNEVPEGLRGRRVLSLDMGALVAGAKYRGEFEERLKSVLNELAKEEGNIILFIDELHTMVGAGKGEGSMDAGNMLKPALARGELHCVGATTLDEYRQYIEKDPALERRFQKVLVDEPTVEDTIAILRGLKERYELHHHVEITDPAIVAAASLSHRYISDRQLPDKAIDLIDEAASSIRMQIDSKPEALDKLERKIIQLKIEQQALSNEHDEASEKRLAILNEELQEKERDYAELEEVWKAEKAALSGTQHIKAALEQARMDLEVARRAGDLNRMSELQYGRIPELEKQLDLAAQAEMQEMTLLRNKVTDAEIAEVLSKQTGIPVSKMLEAEKEKLLRMEDVLHKRVIGQKEAVEVVANAIRRSRAGLSDPNRPIGSFLFLGPTGVGKTELCKTLANFLFDSEDAMVRVDMSEFMEKHSVARLVGAPPGYVGYEEGGYLTEAVRRKPYSVILLDEVEKAHPDVFNILLQVLDDGRLTDGQGRTVDFRNTVVIMTSNLGSSRIQENFARLDYQGIKEQVMDVVSKHFRPEFLNRVDESVVFHPLGQEHIKSIASIQLARLRQRLAERDYQLEVDDEALDLIAHVGFDPVYGARPLKRAIQQNVENPLAKSILAGKFLPGSPILLSVKDGNIFASQ</sequence>
<accession>Q9KU18</accession>